<protein>
    <recommendedName>
        <fullName>Ribonuclease HIII</fullName>
        <shortName>RNase HIII</shortName>
        <ecNumber>3.1.26.4</ecNumber>
    </recommendedName>
</protein>
<organism>
    <name type="scientific">Aquifex aeolicus (strain VF5)</name>
    <dbReference type="NCBI Taxonomy" id="224324"/>
    <lineage>
        <taxon>Bacteria</taxon>
        <taxon>Pseudomonadati</taxon>
        <taxon>Aquificota</taxon>
        <taxon>Aquificia</taxon>
        <taxon>Aquificales</taxon>
        <taxon>Aquificaceae</taxon>
        <taxon>Aquifex</taxon>
    </lineage>
</organism>
<proteinExistence type="evidence at protein level"/>
<feature type="chain" id="PRO_0000111674" description="Ribonuclease HIII">
    <location>
        <begin position="1"/>
        <end position="257"/>
    </location>
</feature>
<feature type="domain" description="RNase H type-2" evidence="2">
    <location>
        <begin position="71"/>
        <end position="257"/>
    </location>
</feature>
<feature type="binding site" evidence="1">
    <location>
        <position position="77"/>
    </location>
    <ligand>
        <name>a divalent metal cation</name>
        <dbReference type="ChEBI" id="CHEBI:60240"/>
    </ligand>
</feature>
<feature type="binding site" evidence="1">
    <location>
        <position position="78"/>
    </location>
    <ligand>
        <name>a divalent metal cation</name>
        <dbReference type="ChEBI" id="CHEBI:60240"/>
    </ligand>
</feature>
<feature type="binding site" evidence="1">
    <location>
        <position position="179"/>
    </location>
    <ligand>
        <name>a divalent metal cation</name>
        <dbReference type="ChEBI" id="CHEBI:60240"/>
    </ligand>
</feature>
<feature type="strand" evidence="4">
    <location>
        <begin position="3"/>
        <end position="5"/>
    </location>
</feature>
<feature type="helix" evidence="4">
    <location>
        <begin position="8"/>
        <end position="20"/>
    </location>
</feature>
<feature type="strand" evidence="4">
    <location>
        <begin position="32"/>
        <end position="37"/>
    </location>
</feature>
<feature type="strand" evidence="4">
    <location>
        <begin position="40"/>
        <end position="44"/>
    </location>
</feature>
<feature type="strand" evidence="4">
    <location>
        <begin position="48"/>
        <end position="54"/>
    </location>
</feature>
<feature type="helix" evidence="4">
    <location>
        <begin position="57"/>
        <end position="65"/>
    </location>
</feature>
<feature type="helix" evidence="4">
    <location>
        <begin position="70"/>
        <end position="72"/>
    </location>
</feature>
<feature type="strand" evidence="4">
    <location>
        <begin position="75"/>
        <end position="80"/>
    </location>
</feature>
<feature type="strand" evidence="4">
    <location>
        <begin position="84"/>
        <end position="86"/>
    </location>
</feature>
<feature type="strand" evidence="4">
    <location>
        <begin position="88"/>
        <end position="94"/>
    </location>
</feature>
<feature type="helix" evidence="4">
    <location>
        <begin position="97"/>
        <end position="99"/>
    </location>
</feature>
<feature type="helix" evidence="4">
    <location>
        <begin position="100"/>
        <end position="105"/>
    </location>
</feature>
<feature type="turn" evidence="4">
    <location>
        <begin position="112"/>
        <end position="114"/>
    </location>
</feature>
<feature type="helix" evidence="4">
    <location>
        <begin position="116"/>
        <end position="126"/>
    </location>
</feature>
<feature type="helix" evidence="4">
    <location>
        <begin position="127"/>
        <end position="129"/>
    </location>
</feature>
<feature type="strand" evidence="4">
    <location>
        <begin position="130"/>
        <end position="137"/>
    </location>
</feature>
<feature type="helix" evidence="4">
    <location>
        <begin position="139"/>
        <end position="149"/>
    </location>
</feature>
<feature type="helix" evidence="4">
    <location>
        <begin position="152"/>
        <end position="171"/>
    </location>
</feature>
<feature type="strand" evidence="4">
    <location>
        <begin position="176"/>
        <end position="178"/>
    </location>
</feature>
<feature type="strand" evidence="4">
    <location>
        <begin position="182"/>
        <end position="184"/>
    </location>
</feature>
<feature type="strand" evidence="4">
    <location>
        <begin position="191"/>
        <end position="193"/>
    </location>
</feature>
<feature type="helix" evidence="4">
    <location>
        <begin position="201"/>
        <end position="225"/>
    </location>
</feature>
<feature type="helix" evidence="4">
    <location>
        <begin position="235"/>
        <end position="242"/>
    </location>
</feature>
<feature type="helix" evidence="4">
    <location>
        <begin position="247"/>
        <end position="249"/>
    </location>
</feature>
<feature type="helix" evidence="4">
    <location>
        <begin position="253"/>
        <end position="255"/>
    </location>
</feature>
<comment type="function">
    <text evidence="1">Endonuclease that specifically degrades the RNA of RNA-DNA hybrids.</text>
</comment>
<comment type="catalytic activity">
    <reaction>
        <text>Endonucleolytic cleavage to 5'-phosphomonoester.</text>
        <dbReference type="EC" id="3.1.26.4"/>
    </reaction>
</comment>
<comment type="cofactor">
    <cofactor evidence="1">
        <name>Mn(2+)</name>
        <dbReference type="ChEBI" id="CHEBI:29035"/>
    </cofactor>
    <cofactor evidence="1">
        <name>Mg(2+)</name>
        <dbReference type="ChEBI" id="CHEBI:18420"/>
    </cofactor>
    <text evidence="1">Manganese or magnesium. Binds 1 divalent metal ion per monomer in the absence of substrate. May bind a second metal ion after substrate binding.</text>
</comment>
<comment type="subcellular location">
    <subcellularLocation>
        <location evidence="3">Cytoplasm</location>
    </subcellularLocation>
</comment>
<comment type="similarity">
    <text evidence="3">Belongs to the RNase HII family. RnhC subfamily.</text>
</comment>
<sequence length="257" mass="29539">MPSLKISPSEAEKIQNYLVSSGFRKINAPYTLWALEGNGVKVYYYKTGSLLIQGKNSEKVLKEVLNLLEKKKLPGCDESGKGDIFGSLVLCCVCIPEENYLKVSSLNPRDTKRLSDKRVERLYLALKPLVKAYCYEIKPEEYNKLYRKFRNLNKMMTHFYKLLIERVKEECGVSEVVVDKYQPSNPFGEDVIFETEAERNLAVAVASIFARYKFLQSLKEVERELGIKIPKGTSKEVKELAKSLKNPERFIKLNFNV</sequence>
<gene>
    <name type="primary">rnhC</name>
    <name type="ordered locus">aq_1768</name>
</gene>
<name>RNH3_AQUAE</name>
<accession>O67644</accession>
<keyword id="KW-0002">3D-structure</keyword>
<keyword id="KW-0963">Cytoplasm</keyword>
<keyword id="KW-0255">Endonuclease</keyword>
<keyword id="KW-0378">Hydrolase</keyword>
<keyword id="KW-0460">Magnesium</keyword>
<keyword id="KW-0479">Metal-binding</keyword>
<keyword id="KW-0540">Nuclease</keyword>
<keyword id="KW-1185">Reference proteome</keyword>
<dbReference type="EC" id="3.1.26.4"/>
<dbReference type="EMBL" id="AE000657">
    <property type="protein sequence ID" value="AAC07614.1"/>
    <property type="molecule type" value="Genomic_DNA"/>
</dbReference>
<dbReference type="PIR" id="B70452">
    <property type="entry name" value="B70452"/>
</dbReference>
<dbReference type="RefSeq" id="NP_214210.1">
    <property type="nucleotide sequence ID" value="NC_000918.1"/>
</dbReference>
<dbReference type="RefSeq" id="WP_010881147.1">
    <property type="nucleotide sequence ID" value="NC_000918.1"/>
</dbReference>
<dbReference type="PDB" id="3VN5">
    <property type="method" value="X-ray"/>
    <property type="resolution" value="1.98 A"/>
    <property type="chains" value="A=1-257"/>
</dbReference>
<dbReference type="PDBsum" id="3VN5"/>
<dbReference type="SMR" id="O67644"/>
<dbReference type="STRING" id="224324.aq_1768"/>
<dbReference type="EnsemblBacteria" id="AAC07614">
    <property type="protein sequence ID" value="AAC07614"/>
    <property type="gene ID" value="aq_1768"/>
</dbReference>
<dbReference type="KEGG" id="aae:aq_1768"/>
<dbReference type="PATRIC" id="fig|224324.8.peg.1363"/>
<dbReference type="eggNOG" id="COG1039">
    <property type="taxonomic scope" value="Bacteria"/>
</dbReference>
<dbReference type="HOGENOM" id="CLU_059546_3_0_0"/>
<dbReference type="InParanoid" id="O67644"/>
<dbReference type="OrthoDB" id="9777935at2"/>
<dbReference type="BRENDA" id="3.1.26.4">
    <property type="organism ID" value="396"/>
</dbReference>
<dbReference type="EvolutionaryTrace" id="O67644"/>
<dbReference type="Proteomes" id="UP000000798">
    <property type="component" value="Chromosome"/>
</dbReference>
<dbReference type="GO" id="GO:0005737">
    <property type="term" value="C:cytoplasm"/>
    <property type="evidence" value="ECO:0007669"/>
    <property type="project" value="UniProtKB-SubCell"/>
</dbReference>
<dbReference type="GO" id="GO:0032299">
    <property type="term" value="C:ribonuclease H2 complex"/>
    <property type="evidence" value="ECO:0000318"/>
    <property type="project" value="GO_Central"/>
</dbReference>
<dbReference type="GO" id="GO:0000287">
    <property type="term" value="F:magnesium ion binding"/>
    <property type="evidence" value="ECO:0007669"/>
    <property type="project" value="UniProtKB-UniRule"/>
</dbReference>
<dbReference type="GO" id="GO:0003723">
    <property type="term" value="F:RNA binding"/>
    <property type="evidence" value="ECO:0007669"/>
    <property type="project" value="InterPro"/>
</dbReference>
<dbReference type="GO" id="GO:0004523">
    <property type="term" value="F:RNA-DNA hybrid ribonuclease activity"/>
    <property type="evidence" value="ECO:0000318"/>
    <property type="project" value="GO_Central"/>
</dbReference>
<dbReference type="GO" id="GO:0043137">
    <property type="term" value="P:DNA replication, removal of RNA primer"/>
    <property type="evidence" value="ECO:0000318"/>
    <property type="project" value="GO_Central"/>
</dbReference>
<dbReference type="GO" id="GO:0006298">
    <property type="term" value="P:mismatch repair"/>
    <property type="evidence" value="ECO:0000318"/>
    <property type="project" value="GO_Central"/>
</dbReference>
<dbReference type="CDD" id="cd14796">
    <property type="entry name" value="RNAse_HIII_N"/>
    <property type="match status" value="1"/>
</dbReference>
<dbReference type="Gene3D" id="3.30.420.10">
    <property type="entry name" value="Ribonuclease H-like superfamily/Ribonuclease H"/>
    <property type="match status" value="1"/>
</dbReference>
<dbReference type="Gene3D" id="3.30.310.10">
    <property type="entry name" value="TATA-Binding Protein"/>
    <property type="match status" value="1"/>
</dbReference>
<dbReference type="HAMAP" id="MF_00053">
    <property type="entry name" value="RNase_HIII"/>
    <property type="match status" value="1"/>
</dbReference>
<dbReference type="InterPro" id="IPR001352">
    <property type="entry name" value="RNase_HII/HIII"/>
</dbReference>
<dbReference type="InterPro" id="IPR024567">
    <property type="entry name" value="RNase_HII/HIII_dom"/>
</dbReference>
<dbReference type="InterPro" id="IPR004641">
    <property type="entry name" value="RNase_HIII"/>
</dbReference>
<dbReference type="InterPro" id="IPR024568">
    <property type="entry name" value="RNase_HIII_N"/>
</dbReference>
<dbReference type="InterPro" id="IPR012337">
    <property type="entry name" value="RNaseH-like_sf"/>
</dbReference>
<dbReference type="InterPro" id="IPR036397">
    <property type="entry name" value="RNaseH_sf"/>
</dbReference>
<dbReference type="InterPro" id="IPR012295">
    <property type="entry name" value="TBP_dom_sf"/>
</dbReference>
<dbReference type="NCBIfam" id="TIGR00716">
    <property type="entry name" value="rnhC"/>
    <property type="match status" value="1"/>
</dbReference>
<dbReference type="PANTHER" id="PTHR10954">
    <property type="entry name" value="RIBONUCLEASE H2 SUBUNIT A"/>
    <property type="match status" value="1"/>
</dbReference>
<dbReference type="PANTHER" id="PTHR10954:SF18">
    <property type="entry name" value="RIBONUCLEASE HII"/>
    <property type="match status" value="1"/>
</dbReference>
<dbReference type="Pfam" id="PF01351">
    <property type="entry name" value="RNase_HII"/>
    <property type="match status" value="1"/>
</dbReference>
<dbReference type="PIRSF" id="PIRSF037748">
    <property type="entry name" value="RnhC"/>
    <property type="match status" value="1"/>
</dbReference>
<dbReference type="SUPFAM" id="SSF53098">
    <property type="entry name" value="Ribonuclease H-like"/>
    <property type="match status" value="1"/>
</dbReference>
<dbReference type="PROSITE" id="PS51975">
    <property type="entry name" value="RNASE_H_2"/>
    <property type="match status" value="1"/>
</dbReference>
<reference key="1">
    <citation type="journal article" date="1998" name="Nature">
        <title>The complete genome of the hyperthermophilic bacterium Aquifex aeolicus.</title>
        <authorList>
            <person name="Deckert G."/>
            <person name="Warren P.V."/>
            <person name="Gaasterland T."/>
            <person name="Young W.G."/>
            <person name="Lenox A.L."/>
            <person name="Graham D.E."/>
            <person name="Overbeek R."/>
            <person name="Snead M.A."/>
            <person name="Keller M."/>
            <person name="Aujay M."/>
            <person name="Huber R."/>
            <person name="Feldman R.A."/>
            <person name="Short J.M."/>
            <person name="Olsen G.J."/>
            <person name="Swanson R.V."/>
        </authorList>
    </citation>
    <scope>NUCLEOTIDE SEQUENCE [LARGE SCALE GENOMIC DNA]</scope>
    <source>
        <strain>VF5</strain>
    </source>
</reference>
<evidence type="ECO:0000250" key="1"/>
<evidence type="ECO:0000255" key="2">
    <source>
        <dbReference type="PROSITE-ProRule" id="PRU01319"/>
    </source>
</evidence>
<evidence type="ECO:0000305" key="3"/>
<evidence type="ECO:0007829" key="4">
    <source>
        <dbReference type="PDB" id="3VN5"/>
    </source>
</evidence>